<name>CH60_PARPJ</name>
<comment type="function">
    <text evidence="1">Together with its co-chaperonin GroES, plays an essential role in assisting protein folding. The GroEL-GroES system forms a nano-cage that allows encapsulation of the non-native substrate proteins and provides a physical environment optimized to promote and accelerate protein folding.</text>
</comment>
<comment type="catalytic activity">
    <reaction evidence="1">
        <text>ATP + H2O + a folded polypeptide = ADP + phosphate + an unfolded polypeptide.</text>
        <dbReference type="EC" id="5.6.1.7"/>
    </reaction>
</comment>
<comment type="subunit">
    <text evidence="1">Forms a cylinder of 14 subunits composed of two heptameric rings stacked back-to-back. Interacts with the co-chaperonin GroES.</text>
</comment>
<comment type="subcellular location">
    <subcellularLocation>
        <location evidence="1">Cytoplasm</location>
    </subcellularLocation>
</comment>
<comment type="similarity">
    <text evidence="1">Belongs to the chaperonin (HSP60) family.</text>
</comment>
<proteinExistence type="inferred from homology"/>
<reference key="1">
    <citation type="journal article" date="2011" name="J. Bacteriol.">
        <title>Complete genome sequence of the plant growth-promoting endophyte Burkholderia phytofirmans strain PsJN.</title>
        <authorList>
            <person name="Weilharter A."/>
            <person name="Mitter B."/>
            <person name="Shin M.V."/>
            <person name="Chain P.S."/>
            <person name="Nowak J."/>
            <person name="Sessitsch A."/>
        </authorList>
    </citation>
    <scope>NUCLEOTIDE SEQUENCE [LARGE SCALE GENOMIC DNA]</scope>
    <source>
        <strain>DSM 17436 / LMG 22146 / PsJN</strain>
    </source>
</reference>
<feature type="chain" id="PRO_1000129984" description="Chaperonin GroEL">
    <location>
        <begin position="1"/>
        <end position="546"/>
    </location>
</feature>
<feature type="binding site" evidence="1">
    <location>
        <begin position="30"/>
        <end position="33"/>
    </location>
    <ligand>
        <name>ATP</name>
        <dbReference type="ChEBI" id="CHEBI:30616"/>
    </ligand>
</feature>
<feature type="binding site" evidence="1">
    <location>
        <position position="51"/>
    </location>
    <ligand>
        <name>ATP</name>
        <dbReference type="ChEBI" id="CHEBI:30616"/>
    </ligand>
</feature>
<feature type="binding site" evidence="1">
    <location>
        <begin position="87"/>
        <end position="91"/>
    </location>
    <ligand>
        <name>ATP</name>
        <dbReference type="ChEBI" id="CHEBI:30616"/>
    </ligand>
</feature>
<feature type="binding site" evidence="1">
    <location>
        <position position="415"/>
    </location>
    <ligand>
        <name>ATP</name>
        <dbReference type="ChEBI" id="CHEBI:30616"/>
    </ligand>
</feature>
<feature type="binding site" evidence="1">
    <location>
        <begin position="479"/>
        <end position="481"/>
    </location>
    <ligand>
        <name>ATP</name>
        <dbReference type="ChEBI" id="CHEBI:30616"/>
    </ligand>
</feature>
<feature type="binding site" evidence="1">
    <location>
        <position position="495"/>
    </location>
    <ligand>
        <name>ATP</name>
        <dbReference type="ChEBI" id="CHEBI:30616"/>
    </ligand>
</feature>
<gene>
    <name evidence="1" type="primary">groEL</name>
    <name evidence="1" type="synonym">groL</name>
    <name type="ordered locus">Bphyt_0864</name>
</gene>
<keyword id="KW-0067">ATP-binding</keyword>
<keyword id="KW-0143">Chaperone</keyword>
<keyword id="KW-0963">Cytoplasm</keyword>
<keyword id="KW-0413">Isomerase</keyword>
<keyword id="KW-0547">Nucleotide-binding</keyword>
<accession>B2T0I0</accession>
<organism>
    <name type="scientific">Paraburkholderia phytofirmans (strain DSM 17436 / LMG 22146 / PsJN)</name>
    <name type="common">Burkholderia phytofirmans</name>
    <dbReference type="NCBI Taxonomy" id="398527"/>
    <lineage>
        <taxon>Bacteria</taxon>
        <taxon>Pseudomonadati</taxon>
        <taxon>Pseudomonadota</taxon>
        <taxon>Betaproteobacteria</taxon>
        <taxon>Burkholderiales</taxon>
        <taxon>Burkholderiaceae</taxon>
        <taxon>Paraburkholderia</taxon>
    </lineage>
</organism>
<sequence>MAAKDVVFGDSARAKMVEGVNILANAVKVTLGPKGRNVVLERSFGGPTVTKDGVSVAKEIELKDKLQNMGAQMVKEVASKTSDNAGDGTTTATVLAQSIVREGMKYVASGMNPMDLKRGIDKAVTAAIEELRKISKPCTTNKEIAQVGAISANSDSSIGDRIAEAMDKVGKEGVITVEDGKSLQDELDVVEGMQFDRGYLSPYFINNPDKQVAVLDNPFVLLHDKKVSNIRDLLPVLEQVAKAGRPLLIIAEDVEGEALATLVVNNIRGILKTVAVKAPGFGDRRKAMLEDIAILTGGQVIAEETGLTLEKATLAELGQAKRIEVGKENTTIIDGAGEAANIEARVKQVRTQIEEATSDYDREKLQERVAKLAGGVAVIKVGAATEVEMKEKKARVEDALHATRAAVEEGIVAGGGVALIRARTAIAGLKGANADQDAGIKIVLRAMEEPLRQIVTNGGEEASVVVAAVAAGQGNYGYNAATGEYVDLVDAGVVDPTKVTRTALQNAASVAGLLLTTDAAVCELPKEDAPMAGGMPGGMGGMGMDM</sequence>
<dbReference type="EC" id="5.6.1.7" evidence="1"/>
<dbReference type="EMBL" id="CP001052">
    <property type="protein sequence ID" value="ACD15285.1"/>
    <property type="molecule type" value="Genomic_DNA"/>
</dbReference>
<dbReference type="RefSeq" id="WP_012431919.1">
    <property type="nucleotide sequence ID" value="NC_010681.1"/>
</dbReference>
<dbReference type="SMR" id="B2T0I0"/>
<dbReference type="STRING" id="398527.Bphyt_0864"/>
<dbReference type="KEGG" id="bpy:Bphyt_0864"/>
<dbReference type="eggNOG" id="COG0459">
    <property type="taxonomic scope" value="Bacteria"/>
</dbReference>
<dbReference type="HOGENOM" id="CLU_016503_3_0_4"/>
<dbReference type="OrthoDB" id="9766614at2"/>
<dbReference type="Proteomes" id="UP000001739">
    <property type="component" value="Chromosome 1"/>
</dbReference>
<dbReference type="GO" id="GO:0005737">
    <property type="term" value="C:cytoplasm"/>
    <property type="evidence" value="ECO:0007669"/>
    <property type="project" value="UniProtKB-SubCell"/>
</dbReference>
<dbReference type="GO" id="GO:0005524">
    <property type="term" value="F:ATP binding"/>
    <property type="evidence" value="ECO:0007669"/>
    <property type="project" value="UniProtKB-UniRule"/>
</dbReference>
<dbReference type="GO" id="GO:0140662">
    <property type="term" value="F:ATP-dependent protein folding chaperone"/>
    <property type="evidence" value="ECO:0007669"/>
    <property type="project" value="InterPro"/>
</dbReference>
<dbReference type="GO" id="GO:0016853">
    <property type="term" value="F:isomerase activity"/>
    <property type="evidence" value="ECO:0007669"/>
    <property type="project" value="UniProtKB-KW"/>
</dbReference>
<dbReference type="GO" id="GO:0051082">
    <property type="term" value="F:unfolded protein binding"/>
    <property type="evidence" value="ECO:0007669"/>
    <property type="project" value="UniProtKB-UniRule"/>
</dbReference>
<dbReference type="GO" id="GO:0042026">
    <property type="term" value="P:protein refolding"/>
    <property type="evidence" value="ECO:0007669"/>
    <property type="project" value="UniProtKB-UniRule"/>
</dbReference>
<dbReference type="CDD" id="cd03344">
    <property type="entry name" value="GroEL"/>
    <property type="match status" value="1"/>
</dbReference>
<dbReference type="FunFam" id="1.10.560.10:FF:000001">
    <property type="entry name" value="60 kDa chaperonin"/>
    <property type="match status" value="1"/>
</dbReference>
<dbReference type="FunFam" id="3.50.7.10:FF:000001">
    <property type="entry name" value="60 kDa chaperonin"/>
    <property type="match status" value="1"/>
</dbReference>
<dbReference type="Gene3D" id="3.50.7.10">
    <property type="entry name" value="GroEL"/>
    <property type="match status" value="1"/>
</dbReference>
<dbReference type="Gene3D" id="1.10.560.10">
    <property type="entry name" value="GroEL-like equatorial domain"/>
    <property type="match status" value="1"/>
</dbReference>
<dbReference type="Gene3D" id="3.30.260.10">
    <property type="entry name" value="TCP-1-like chaperonin intermediate domain"/>
    <property type="match status" value="1"/>
</dbReference>
<dbReference type="HAMAP" id="MF_00600">
    <property type="entry name" value="CH60"/>
    <property type="match status" value="1"/>
</dbReference>
<dbReference type="InterPro" id="IPR018370">
    <property type="entry name" value="Chaperonin_Cpn60_CS"/>
</dbReference>
<dbReference type="InterPro" id="IPR001844">
    <property type="entry name" value="Cpn60/GroEL"/>
</dbReference>
<dbReference type="InterPro" id="IPR002423">
    <property type="entry name" value="Cpn60/GroEL/TCP-1"/>
</dbReference>
<dbReference type="InterPro" id="IPR027409">
    <property type="entry name" value="GroEL-like_apical_dom_sf"/>
</dbReference>
<dbReference type="InterPro" id="IPR027413">
    <property type="entry name" value="GROEL-like_equatorial_sf"/>
</dbReference>
<dbReference type="InterPro" id="IPR027410">
    <property type="entry name" value="TCP-1-like_intermed_sf"/>
</dbReference>
<dbReference type="NCBIfam" id="TIGR02348">
    <property type="entry name" value="GroEL"/>
    <property type="match status" value="1"/>
</dbReference>
<dbReference type="NCBIfam" id="NF000592">
    <property type="entry name" value="PRK00013.1"/>
    <property type="match status" value="1"/>
</dbReference>
<dbReference type="NCBIfam" id="NF009487">
    <property type="entry name" value="PRK12849.1"/>
    <property type="match status" value="1"/>
</dbReference>
<dbReference type="NCBIfam" id="NF009488">
    <property type="entry name" value="PRK12850.1"/>
    <property type="match status" value="1"/>
</dbReference>
<dbReference type="NCBIfam" id="NF009489">
    <property type="entry name" value="PRK12851.1"/>
    <property type="match status" value="1"/>
</dbReference>
<dbReference type="PANTHER" id="PTHR45633">
    <property type="entry name" value="60 KDA HEAT SHOCK PROTEIN, MITOCHONDRIAL"/>
    <property type="match status" value="1"/>
</dbReference>
<dbReference type="Pfam" id="PF00118">
    <property type="entry name" value="Cpn60_TCP1"/>
    <property type="match status" value="1"/>
</dbReference>
<dbReference type="PRINTS" id="PR00298">
    <property type="entry name" value="CHAPERONIN60"/>
</dbReference>
<dbReference type="SUPFAM" id="SSF52029">
    <property type="entry name" value="GroEL apical domain-like"/>
    <property type="match status" value="1"/>
</dbReference>
<dbReference type="SUPFAM" id="SSF48592">
    <property type="entry name" value="GroEL equatorial domain-like"/>
    <property type="match status" value="1"/>
</dbReference>
<dbReference type="SUPFAM" id="SSF54849">
    <property type="entry name" value="GroEL-intermediate domain like"/>
    <property type="match status" value="1"/>
</dbReference>
<dbReference type="PROSITE" id="PS00296">
    <property type="entry name" value="CHAPERONINS_CPN60"/>
    <property type="match status" value="1"/>
</dbReference>
<evidence type="ECO:0000255" key="1">
    <source>
        <dbReference type="HAMAP-Rule" id="MF_00600"/>
    </source>
</evidence>
<protein>
    <recommendedName>
        <fullName evidence="1">Chaperonin GroEL</fullName>
        <ecNumber evidence="1">5.6.1.7</ecNumber>
    </recommendedName>
    <alternativeName>
        <fullName evidence="1">60 kDa chaperonin</fullName>
    </alternativeName>
    <alternativeName>
        <fullName evidence="1">Chaperonin-60</fullName>
        <shortName evidence="1">Cpn60</shortName>
    </alternativeName>
</protein>